<reference key="1">
    <citation type="journal article" date="2008" name="Proc. Natl. Acad. Sci. U.S.A.">
        <title>The genome sequence of Bifidobacterium longum subsp. infantis reveals adaptations for milk utilization within the infant microbiome.</title>
        <authorList>
            <person name="Sela D.A."/>
            <person name="Chapman J."/>
            <person name="Adeuya A."/>
            <person name="Kim J.H."/>
            <person name="Chen F."/>
            <person name="Whitehead T.R."/>
            <person name="Lapidus A."/>
            <person name="Rokhsar D.S."/>
            <person name="Lebrilla C.B."/>
            <person name="German J.B."/>
            <person name="Price N.P."/>
            <person name="Richardson P.M."/>
            <person name="Mills D.A."/>
        </authorList>
    </citation>
    <scope>NUCLEOTIDE SEQUENCE [LARGE SCALE GENOMIC DNA]</scope>
    <source>
        <strain>ATCC 15697 / DSM 20088 / JCM 1222 / NCTC 11817 / S12</strain>
    </source>
</reference>
<reference key="2">
    <citation type="journal article" date="2011" name="Nature">
        <title>Bifidobacteria can protect from enteropathogenic infection through production of acetate.</title>
        <authorList>
            <person name="Fukuda S."/>
            <person name="Toh H."/>
            <person name="Hase K."/>
            <person name="Oshima K."/>
            <person name="Nakanishi Y."/>
            <person name="Yoshimura K."/>
            <person name="Tobe T."/>
            <person name="Clarke J.M."/>
            <person name="Topping D.L."/>
            <person name="Suzuki T."/>
            <person name="Taylor T.D."/>
            <person name="Itoh K."/>
            <person name="Kikuchi J."/>
            <person name="Morita H."/>
            <person name="Hattori M."/>
            <person name="Ohno H."/>
        </authorList>
    </citation>
    <scope>NUCLEOTIDE SEQUENCE [LARGE SCALE GENOMIC DNA]</scope>
    <source>
        <strain>ATCC 15697 / DSM 20088 / JCM 1222 / NCTC 11817 / S12</strain>
    </source>
</reference>
<name>SYY_BIFLS</name>
<gene>
    <name evidence="1" type="primary">tyrS</name>
    <name type="ordered locus">Blon_1867</name>
    <name type="ordered locus">BLIJ_1933</name>
</gene>
<evidence type="ECO:0000255" key="1">
    <source>
        <dbReference type="HAMAP-Rule" id="MF_02006"/>
    </source>
</evidence>
<accession>B7GTN2</accession>
<accession>E8MLT5</accession>
<protein>
    <recommendedName>
        <fullName evidence="1">Tyrosine--tRNA ligase</fullName>
        <ecNumber evidence="1">6.1.1.1</ecNumber>
    </recommendedName>
    <alternativeName>
        <fullName evidence="1">Tyrosyl-tRNA synthetase</fullName>
        <shortName evidence="1">TyrRS</shortName>
    </alternativeName>
</protein>
<comment type="function">
    <text evidence="1">Catalyzes the attachment of tyrosine to tRNA(Tyr) in a two-step reaction: tyrosine is first activated by ATP to form Tyr-AMP and then transferred to the acceptor end of tRNA(Tyr).</text>
</comment>
<comment type="catalytic activity">
    <reaction evidence="1">
        <text>tRNA(Tyr) + L-tyrosine + ATP = L-tyrosyl-tRNA(Tyr) + AMP + diphosphate + H(+)</text>
        <dbReference type="Rhea" id="RHEA:10220"/>
        <dbReference type="Rhea" id="RHEA-COMP:9706"/>
        <dbReference type="Rhea" id="RHEA-COMP:9707"/>
        <dbReference type="ChEBI" id="CHEBI:15378"/>
        <dbReference type="ChEBI" id="CHEBI:30616"/>
        <dbReference type="ChEBI" id="CHEBI:33019"/>
        <dbReference type="ChEBI" id="CHEBI:58315"/>
        <dbReference type="ChEBI" id="CHEBI:78442"/>
        <dbReference type="ChEBI" id="CHEBI:78536"/>
        <dbReference type="ChEBI" id="CHEBI:456215"/>
        <dbReference type="EC" id="6.1.1.1"/>
    </reaction>
</comment>
<comment type="subunit">
    <text evidence="1">Homodimer.</text>
</comment>
<comment type="subcellular location">
    <subcellularLocation>
        <location evidence="1">Cytoplasm</location>
    </subcellularLocation>
</comment>
<comment type="similarity">
    <text evidence="1">Belongs to the class-I aminoacyl-tRNA synthetase family. TyrS type 1 subfamily.</text>
</comment>
<organism>
    <name type="scientific">Bifidobacterium longum subsp. infantis (strain ATCC 15697 / DSM 20088 / JCM 1222 / NCTC 11817 / S12)</name>
    <dbReference type="NCBI Taxonomy" id="391904"/>
    <lineage>
        <taxon>Bacteria</taxon>
        <taxon>Bacillati</taxon>
        <taxon>Actinomycetota</taxon>
        <taxon>Actinomycetes</taxon>
        <taxon>Bifidobacteriales</taxon>
        <taxon>Bifidobacteriaceae</taxon>
        <taxon>Bifidobacterium</taxon>
    </lineage>
</organism>
<feature type="chain" id="PRO_1000189260" description="Tyrosine--tRNA ligase">
    <location>
        <begin position="1"/>
        <end position="440"/>
    </location>
</feature>
<feature type="domain" description="S4 RNA-binding" evidence="1">
    <location>
        <begin position="373"/>
        <end position="439"/>
    </location>
</feature>
<feature type="short sequence motif" description="'HIGH' region">
    <location>
        <begin position="51"/>
        <end position="60"/>
    </location>
</feature>
<feature type="short sequence motif" description="'KMSKS' region">
    <location>
        <begin position="241"/>
        <end position="245"/>
    </location>
</feature>
<feature type="binding site" evidence="1">
    <location>
        <position position="46"/>
    </location>
    <ligand>
        <name>L-tyrosine</name>
        <dbReference type="ChEBI" id="CHEBI:58315"/>
    </ligand>
</feature>
<feature type="binding site" evidence="1">
    <location>
        <position position="181"/>
    </location>
    <ligand>
        <name>L-tyrosine</name>
        <dbReference type="ChEBI" id="CHEBI:58315"/>
    </ligand>
</feature>
<feature type="binding site" evidence="1">
    <location>
        <position position="185"/>
    </location>
    <ligand>
        <name>L-tyrosine</name>
        <dbReference type="ChEBI" id="CHEBI:58315"/>
    </ligand>
</feature>
<feature type="binding site" evidence="1">
    <location>
        <position position="244"/>
    </location>
    <ligand>
        <name>ATP</name>
        <dbReference type="ChEBI" id="CHEBI:30616"/>
    </ligand>
</feature>
<proteinExistence type="inferred from homology"/>
<sequence length="440" mass="48412">MAHVTDFKEAGFNTLLEELEWRGLISQSTDRDRLAEALNGEPITYYCGFDPTAASLHIGNLVQLINMRHLQLAGHHPIALVGGATGLIGDPRQSGERTLNPKDVVAGWADRLKNQIGGILDTEGANAVRFVSNYDWTASMTVIDFLRDVGKNFRLGTMLAKDTVARRLNSEEGISFTEFSYQVLQGNDFLHLFDEYHCTLELGGSDQWGNLTSGLDLIHKVRGVDVNVFTSPIITDASGKKFGKSEGNAVWLDATMLSPYKFYQFWINRPDVEMESLLKAFTFLPKAEIERLVEESKTNPGKREAQKTLAWEVTSFVHGEAATQAAIDASGALFGRGGNLEDIDEETLESVLDGFKVVDENGEHVFPVSKPGDRVIDAAQAAGLFKSASEARRAIKSGGVYLNNNRIEDEEQVLAEADFLAGRFALIRRGKKALGAVENR</sequence>
<keyword id="KW-0030">Aminoacyl-tRNA synthetase</keyword>
<keyword id="KW-0067">ATP-binding</keyword>
<keyword id="KW-0963">Cytoplasm</keyword>
<keyword id="KW-0436">Ligase</keyword>
<keyword id="KW-0547">Nucleotide-binding</keyword>
<keyword id="KW-0648">Protein biosynthesis</keyword>
<keyword id="KW-0694">RNA-binding</keyword>
<dbReference type="EC" id="6.1.1.1" evidence="1"/>
<dbReference type="EMBL" id="CP001095">
    <property type="protein sequence ID" value="ACJ52941.1"/>
    <property type="molecule type" value="Genomic_DNA"/>
</dbReference>
<dbReference type="EMBL" id="AP010889">
    <property type="protein sequence ID" value="BAJ69512.1"/>
    <property type="molecule type" value="Genomic_DNA"/>
</dbReference>
<dbReference type="RefSeq" id="WP_007051155.1">
    <property type="nucleotide sequence ID" value="NZ_JDTT01000009.1"/>
</dbReference>
<dbReference type="SMR" id="B7GTN2"/>
<dbReference type="GeneID" id="69577809"/>
<dbReference type="KEGG" id="bln:Blon_1867"/>
<dbReference type="KEGG" id="blon:BLIJ_1933"/>
<dbReference type="PATRIC" id="fig|391904.8.peg.1938"/>
<dbReference type="HOGENOM" id="CLU_024003_0_3_11"/>
<dbReference type="Proteomes" id="UP000001360">
    <property type="component" value="Chromosome"/>
</dbReference>
<dbReference type="GO" id="GO:0005829">
    <property type="term" value="C:cytosol"/>
    <property type="evidence" value="ECO:0007669"/>
    <property type="project" value="TreeGrafter"/>
</dbReference>
<dbReference type="GO" id="GO:0005524">
    <property type="term" value="F:ATP binding"/>
    <property type="evidence" value="ECO:0007669"/>
    <property type="project" value="UniProtKB-UniRule"/>
</dbReference>
<dbReference type="GO" id="GO:0003723">
    <property type="term" value="F:RNA binding"/>
    <property type="evidence" value="ECO:0007669"/>
    <property type="project" value="UniProtKB-KW"/>
</dbReference>
<dbReference type="GO" id="GO:0004831">
    <property type="term" value="F:tyrosine-tRNA ligase activity"/>
    <property type="evidence" value="ECO:0007669"/>
    <property type="project" value="UniProtKB-UniRule"/>
</dbReference>
<dbReference type="GO" id="GO:0006437">
    <property type="term" value="P:tyrosyl-tRNA aminoacylation"/>
    <property type="evidence" value="ECO:0007669"/>
    <property type="project" value="UniProtKB-UniRule"/>
</dbReference>
<dbReference type="CDD" id="cd00165">
    <property type="entry name" value="S4"/>
    <property type="match status" value="1"/>
</dbReference>
<dbReference type="CDD" id="cd00805">
    <property type="entry name" value="TyrRS_core"/>
    <property type="match status" value="1"/>
</dbReference>
<dbReference type="FunFam" id="1.10.240.10:FF:000001">
    <property type="entry name" value="Tyrosine--tRNA ligase"/>
    <property type="match status" value="1"/>
</dbReference>
<dbReference type="Gene3D" id="3.40.50.620">
    <property type="entry name" value="HUPs"/>
    <property type="match status" value="1"/>
</dbReference>
<dbReference type="Gene3D" id="3.10.290.10">
    <property type="entry name" value="RNA-binding S4 domain"/>
    <property type="match status" value="1"/>
</dbReference>
<dbReference type="Gene3D" id="1.10.240.10">
    <property type="entry name" value="Tyrosyl-Transfer RNA Synthetase"/>
    <property type="match status" value="1"/>
</dbReference>
<dbReference type="HAMAP" id="MF_02006">
    <property type="entry name" value="Tyr_tRNA_synth_type1"/>
    <property type="match status" value="1"/>
</dbReference>
<dbReference type="InterPro" id="IPR001412">
    <property type="entry name" value="aa-tRNA-synth_I_CS"/>
</dbReference>
<dbReference type="InterPro" id="IPR002305">
    <property type="entry name" value="aa-tRNA-synth_Ic"/>
</dbReference>
<dbReference type="InterPro" id="IPR014729">
    <property type="entry name" value="Rossmann-like_a/b/a_fold"/>
</dbReference>
<dbReference type="InterPro" id="IPR036986">
    <property type="entry name" value="S4_RNA-bd_sf"/>
</dbReference>
<dbReference type="InterPro" id="IPR054608">
    <property type="entry name" value="SYY-like_C"/>
</dbReference>
<dbReference type="InterPro" id="IPR002307">
    <property type="entry name" value="Tyr-tRNA-ligase"/>
</dbReference>
<dbReference type="InterPro" id="IPR024088">
    <property type="entry name" value="Tyr-tRNA-ligase_bac-type"/>
</dbReference>
<dbReference type="InterPro" id="IPR024107">
    <property type="entry name" value="Tyr-tRNA-ligase_bac_1"/>
</dbReference>
<dbReference type="NCBIfam" id="TIGR00234">
    <property type="entry name" value="tyrS"/>
    <property type="match status" value="1"/>
</dbReference>
<dbReference type="PANTHER" id="PTHR11766:SF0">
    <property type="entry name" value="TYROSINE--TRNA LIGASE, MITOCHONDRIAL"/>
    <property type="match status" value="1"/>
</dbReference>
<dbReference type="PANTHER" id="PTHR11766">
    <property type="entry name" value="TYROSYL-TRNA SYNTHETASE"/>
    <property type="match status" value="1"/>
</dbReference>
<dbReference type="Pfam" id="PF22421">
    <property type="entry name" value="SYY_C-terminal"/>
    <property type="match status" value="1"/>
</dbReference>
<dbReference type="Pfam" id="PF00579">
    <property type="entry name" value="tRNA-synt_1b"/>
    <property type="match status" value="1"/>
</dbReference>
<dbReference type="PRINTS" id="PR01040">
    <property type="entry name" value="TRNASYNTHTYR"/>
</dbReference>
<dbReference type="SUPFAM" id="SSF55174">
    <property type="entry name" value="Alpha-L RNA-binding motif"/>
    <property type="match status" value="1"/>
</dbReference>
<dbReference type="SUPFAM" id="SSF52374">
    <property type="entry name" value="Nucleotidylyl transferase"/>
    <property type="match status" value="1"/>
</dbReference>
<dbReference type="PROSITE" id="PS00178">
    <property type="entry name" value="AA_TRNA_LIGASE_I"/>
    <property type="match status" value="1"/>
</dbReference>
<dbReference type="PROSITE" id="PS50889">
    <property type="entry name" value="S4"/>
    <property type="match status" value="1"/>
</dbReference>